<gene>
    <name type="ordered locus">Reut_A2449</name>
</gene>
<protein>
    <recommendedName>
        <fullName evidence="1">Putative hydro-lyase Reut_A2449</fullName>
        <ecNumber evidence="1">4.2.1.-</ecNumber>
    </recommendedName>
</protein>
<comment type="similarity">
    <text evidence="1">Belongs to the D-glutamate cyclase family.</text>
</comment>
<dbReference type="EC" id="4.2.1.-" evidence="1"/>
<dbReference type="EMBL" id="CP000090">
    <property type="protein sequence ID" value="AAZ61811.1"/>
    <property type="molecule type" value="Genomic_DNA"/>
</dbReference>
<dbReference type="SMR" id="Q46YH2"/>
<dbReference type="STRING" id="264198.Reut_A2449"/>
<dbReference type="KEGG" id="reu:Reut_A2449"/>
<dbReference type="eggNOG" id="COG4336">
    <property type="taxonomic scope" value="Bacteria"/>
</dbReference>
<dbReference type="HOGENOM" id="CLU_059759_0_0_4"/>
<dbReference type="OrthoDB" id="149585at2"/>
<dbReference type="GO" id="GO:0016829">
    <property type="term" value="F:lyase activity"/>
    <property type="evidence" value="ECO:0007669"/>
    <property type="project" value="UniProtKB-KW"/>
</dbReference>
<dbReference type="FunFam" id="3.30.2040.10:FF:000001">
    <property type="entry name" value="D-glutamate cyclase, mitochondrial"/>
    <property type="match status" value="1"/>
</dbReference>
<dbReference type="Gene3D" id="3.40.1640.10">
    <property type="entry name" value="PSTPO5379-like"/>
    <property type="match status" value="1"/>
</dbReference>
<dbReference type="Gene3D" id="3.30.2040.10">
    <property type="entry name" value="PSTPO5379-like domain"/>
    <property type="match status" value="1"/>
</dbReference>
<dbReference type="HAMAP" id="MF_01830">
    <property type="entry name" value="Hydro_lyase"/>
    <property type="match status" value="1"/>
</dbReference>
<dbReference type="InterPro" id="IPR009906">
    <property type="entry name" value="D-Glu_cyclase"/>
</dbReference>
<dbReference type="InterPro" id="IPR038021">
    <property type="entry name" value="Putative_hydro-lyase"/>
</dbReference>
<dbReference type="InterPro" id="IPR016938">
    <property type="entry name" value="UPF0317"/>
</dbReference>
<dbReference type="NCBIfam" id="NF003969">
    <property type="entry name" value="PRK05463.1"/>
    <property type="match status" value="1"/>
</dbReference>
<dbReference type="PANTHER" id="PTHR32022">
    <property type="entry name" value="D-GLUTAMATE CYCLASE, MITOCHONDRIAL"/>
    <property type="match status" value="1"/>
</dbReference>
<dbReference type="PANTHER" id="PTHR32022:SF10">
    <property type="entry name" value="D-GLUTAMATE CYCLASE, MITOCHONDRIAL"/>
    <property type="match status" value="1"/>
</dbReference>
<dbReference type="Pfam" id="PF07286">
    <property type="entry name" value="D-Glu_cyclase"/>
    <property type="match status" value="1"/>
</dbReference>
<dbReference type="PIRSF" id="PIRSF029755">
    <property type="entry name" value="UCP029755"/>
    <property type="match status" value="1"/>
</dbReference>
<dbReference type="SUPFAM" id="SSF160920">
    <property type="entry name" value="PSTPO5379-like"/>
    <property type="match status" value="1"/>
</dbReference>
<evidence type="ECO:0000255" key="1">
    <source>
        <dbReference type="HAMAP-Rule" id="MF_01830"/>
    </source>
</evidence>
<name>Y2449_CUPPJ</name>
<keyword id="KW-0456">Lyase</keyword>
<organism>
    <name type="scientific">Cupriavidus pinatubonensis (strain JMP 134 / LMG 1197)</name>
    <name type="common">Cupriavidus necator (strain JMP 134)</name>
    <dbReference type="NCBI Taxonomy" id="264198"/>
    <lineage>
        <taxon>Bacteria</taxon>
        <taxon>Pseudomonadati</taxon>
        <taxon>Pseudomonadota</taxon>
        <taxon>Betaproteobacteria</taxon>
        <taxon>Burkholderiales</taxon>
        <taxon>Burkholderiaceae</taxon>
        <taxon>Cupriavidus</taxon>
    </lineage>
</organism>
<accession>Q46YH2</accession>
<proteinExistence type="inferred from homology"/>
<sequence>MTNHMLDEVRSAAVAAARTARESYRAGKIQPTAGVAPGMTQANMIALPRDWAWDFLLYAQRNPKACPVLDVIEAGAYHTVLAEGADIRTDIPLYRVWRNGRLVEEVADATPLWQEHPDLVTFLIGCSFTFETPLLEAGIEVRHITDGSNVPMYRTNRQCRPAGRLHGELVVSMRPIAASRIADAAMISGRFPSVHGAPVHVGNPEALGIADIHRPDFGDAVRIESGEIPVFWACGVTPQAAVMASGVPFAVTHAPGHMFVTDVPDSTYHV</sequence>
<feature type="chain" id="PRO_0000379858" description="Putative hydro-lyase Reut_A2449">
    <location>
        <begin position="1"/>
        <end position="270"/>
    </location>
</feature>
<reference key="1">
    <citation type="journal article" date="2010" name="PLoS ONE">
        <title>The complete multipartite genome sequence of Cupriavidus necator JMP134, a versatile pollutant degrader.</title>
        <authorList>
            <person name="Lykidis A."/>
            <person name="Perez-Pantoja D."/>
            <person name="Ledger T."/>
            <person name="Mavromatis K."/>
            <person name="Anderson I.J."/>
            <person name="Ivanova N.N."/>
            <person name="Hooper S.D."/>
            <person name="Lapidus A."/>
            <person name="Lucas S."/>
            <person name="Gonzalez B."/>
            <person name="Kyrpides N.C."/>
        </authorList>
    </citation>
    <scope>NUCLEOTIDE SEQUENCE [LARGE SCALE GENOMIC DNA]</scope>
    <source>
        <strain>JMP134 / LMG 1197</strain>
    </source>
</reference>